<protein>
    <recommendedName>
        <fullName evidence="1">3-methyl-2-oxobutanoate hydroxymethyltransferase</fullName>
        <ecNumber evidence="1">2.1.2.11</ecNumber>
    </recommendedName>
    <alternativeName>
        <fullName evidence="1">Ketopantoate hydroxymethyltransferase</fullName>
        <shortName evidence="1">KPHMT</shortName>
    </alternativeName>
</protein>
<dbReference type="EC" id="2.1.2.11" evidence="1"/>
<dbReference type="EMBL" id="AM933173">
    <property type="protein sequence ID" value="CAR36093.1"/>
    <property type="molecule type" value="Genomic_DNA"/>
</dbReference>
<dbReference type="RefSeq" id="WP_000805487.1">
    <property type="nucleotide sequence ID" value="NC_011274.1"/>
</dbReference>
<dbReference type="SMR" id="B5RHC1"/>
<dbReference type="KEGG" id="seg:SG0186"/>
<dbReference type="HOGENOM" id="CLU_036645_1_0_6"/>
<dbReference type="UniPathway" id="UPA00028">
    <property type="reaction ID" value="UER00003"/>
</dbReference>
<dbReference type="Proteomes" id="UP000008321">
    <property type="component" value="Chromosome"/>
</dbReference>
<dbReference type="GO" id="GO:0005737">
    <property type="term" value="C:cytoplasm"/>
    <property type="evidence" value="ECO:0007669"/>
    <property type="project" value="UniProtKB-SubCell"/>
</dbReference>
<dbReference type="GO" id="GO:0003864">
    <property type="term" value="F:3-methyl-2-oxobutanoate hydroxymethyltransferase activity"/>
    <property type="evidence" value="ECO:0007669"/>
    <property type="project" value="UniProtKB-UniRule"/>
</dbReference>
<dbReference type="GO" id="GO:0000287">
    <property type="term" value="F:magnesium ion binding"/>
    <property type="evidence" value="ECO:0007669"/>
    <property type="project" value="TreeGrafter"/>
</dbReference>
<dbReference type="GO" id="GO:0015940">
    <property type="term" value="P:pantothenate biosynthetic process"/>
    <property type="evidence" value="ECO:0007669"/>
    <property type="project" value="UniProtKB-UniRule"/>
</dbReference>
<dbReference type="CDD" id="cd06557">
    <property type="entry name" value="KPHMT-like"/>
    <property type="match status" value="1"/>
</dbReference>
<dbReference type="FunFam" id="3.20.20.60:FF:000003">
    <property type="entry name" value="3-methyl-2-oxobutanoate hydroxymethyltransferase"/>
    <property type="match status" value="1"/>
</dbReference>
<dbReference type="Gene3D" id="3.20.20.60">
    <property type="entry name" value="Phosphoenolpyruvate-binding domains"/>
    <property type="match status" value="1"/>
</dbReference>
<dbReference type="HAMAP" id="MF_00156">
    <property type="entry name" value="PanB"/>
    <property type="match status" value="1"/>
</dbReference>
<dbReference type="InterPro" id="IPR003700">
    <property type="entry name" value="Pantoate_hydroxy_MeTrfase"/>
</dbReference>
<dbReference type="InterPro" id="IPR015813">
    <property type="entry name" value="Pyrv/PenolPyrv_kinase-like_dom"/>
</dbReference>
<dbReference type="InterPro" id="IPR040442">
    <property type="entry name" value="Pyrv_kinase-like_dom_sf"/>
</dbReference>
<dbReference type="NCBIfam" id="TIGR00222">
    <property type="entry name" value="panB"/>
    <property type="match status" value="1"/>
</dbReference>
<dbReference type="NCBIfam" id="NF001452">
    <property type="entry name" value="PRK00311.1"/>
    <property type="match status" value="1"/>
</dbReference>
<dbReference type="PANTHER" id="PTHR20881">
    <property type="entry name" value="3-METHYL-2-OXOBUTANOATE HYDROXYMETHYLTRANSFERASE"/>
    <property type="match status" value="1"/>
</dbReference>
<dbReference type="PANTHER" id="PTHR20881:SF0">
    <property type="entry name" value="3-METHYL-2-OXOBUTANOATE HYDROXYMETHYLTRANSFERASE"/>
    <property type="match status" value="1"/>
</dbReference>
<dbReference type="Pfam" id="PF02548">
    <property type="entry name" value="Pantoate_transf"/>
    <property type="match status" value="1"/>
</dbReference>
<dbReference type="PIRSF" id="PIRSF000388">
    <property type="entry name" value="Pantoate_hydroxy_MeTrfase"/>
    <property type="match status" value="1"/>
</dbReference>
<dbReference type="SUPFAM" id="SSF51621">
    <property type="entry name" value="Phosphoenolpyruvate/pyruvate domain"/>
    <property type="match status" value="1"/>
</dbReference>
<keyword id="KW-0963">Cytoplasm</keyword>
<keyword id="KW-0460">Magnesium</keyword>
<keyword id="KW-0479">Metal-binding</keyword>
<keyword id="KW-0566">Pantothenate biosynthesis</keyword>
<keyword id="KW-0808">Transferase</keyword>
<comment type="function">
    <text evidence="1">Catalyzes the reversible reaction in which hydroxymethyl group from 5,10-methylenetetrahydrofolate is transferred onto alpha-ketoisovalerate to form ketopantoate.</text>
</comment>
<comment type="catalytic activity">
    <reaction evidence="1">
        <text>3-methyl-2-oxobutanoate + (6R)-5,10-methylene-5,6,7,8-tetrahydrofolate + H2O = 2-dehydropantoate + (6S)-5,6,7,8-tetrahydrofolate</text>
        <dbReference type="Rhea" id="RHEA:11824"/>
        <dbReference type="ChEBI" id="CHEBI:11561"/>
        <dbReference type="ChEBI" id="CHEBI:11851"/>
        <dbReference type="ChEBI" id="CHEBI:15377"/>
        <dbReference type="ChEBI" id="CHEBI:15636"/>
        <dbReference type="ChEBI" id="CHEBI:57453"/>
        <dbReference type="EC" id="2.1.2.11"/>
    </reaction>
</comment>
<comment type="cofactor">
    <cofactor evidence="1">
        <name>Mg(2+)</name>
        <dbReference type="ChEBI" id="CHEBI:18420"/>
    </cofactor>
    <text evidence="1">Binds 1 Mg(2+) ion per subunit.</text>
</comment>
<comment type="pathway">
    <text evidence="1">Cofactor biosynthesis; (R)-pantothenate biosynthesis; (R)-pantoate from 3-methyl-2-oxobutanoate: step 1/2.</text>
</comment>
<comment type="subunit">
    <text evidence="1">Homodecamer; pentamer of dimers.</text>
</comment>
<comment type="subcellular location">
    <subcellularLocation>
        <location evidence="1">Cytoplasm</location>
    </subcellularLocation>
</comment>
<comment type="similarity">
    <text evidence="1">Belongs to the PanB family.</text>
</comment>
<sequence length="263" mass="28105">MKPTTISLLQKCKQEKKRFATITAYDYSFAKLFADEGINVMLVGDSLGMTIQGHDSTLPVTVEDIAYHTRAVRRGAPNCLLLSDLPFMAYATPEQACENAAIVMRAGANMVKIEGGAWLVDTVKMLTERAVPVCGHLGLTPQSVNIFGGYKIQGRGDAGQVLLDDALALEAAGAQLLVLECVPVELAKRVTEALSIPVIGIGAGNVTDGQILVMHDAFGITGGHIPKFAKNFLAEAGDMRAAVQQYMAEVESGVYPGEEHSFH</sequence>
<feature type="chain" id="PRO_1000097003" description="3-methyl-2-oxobutanoate hydroxymethyltransferase">
    <location>
        <begin position="1"/>
        <end position="263"/>
    </location>
</feature>
<feature type="active site" description="Proton acceptor" evidence="1">
    <location>
        <position position="180"/>
    </location>
</feature>
<feature type="binding site" evidence="1">
    <location>
        <begin position="45"/>
        <end position="46"/>
    </location>
    <ligand>
        <name>3-methyl-2-oxobutanoate</name>
        <dbReference type="ChEBI" id="CHEBI:11851"/>
    </ligand>
</feature>
<feature type="binding site" evidence="1">
    <location>
        <position position="45"/>
    </location>
    <ligand>
        <name>Mg(2+)</name>
        <dbReference type="ChEBI" id="CHEBI:18420"/>
    </ligand>
</feature>
<feature type="binding site" evidence="1">
    <location>
        <position position="84"/>
    </location>
    <ligand>
        <name>3-methyl-2-oxobutanoate</name>
        <dbReference type="ChEBI" id="CHEBI:11851"/>
    </ligand>
</feature>
<feature type="binding site" evidence="1">
    <location>
        <position position="84"/>
    </location>
    <ligand>
        <name>Mg(2+)</name>
        <dbReference type="ChEBI" id="CHEBI:18420"/>
    </ligand>
</feature>
<feature type="binding site" evidence="1">
    <location>
        <position position="112"/>
    </location>
    <ligand>
        <name>3-methyl-2-oxobutanoate</name>
        <dbReference type="ChEBI" id="CHEBI:11851"/>
    </ligand>
</feature>
<feature type="binding site" evidence="1">
    <location>
        <position position="114"/>
    </location>
    <ligand>
        <name>Mg(2+)</name>
        <dbReference type="ChEBI" id="CHEBI:18420"/>
    </ligand>
</feature>
<evidence type="ECO:0000255" key="1">
    <source>
        <dbReference type="HAMAP-Rule" id="MF_00156"/>
    </source>
</evidence>
<proteinExistence type="inferred from homology"/>
<name>PANB_SALG2</name>
<reference key="1">
    <citation type="journal article" date="2008" name="Genome Res.">
        <title>Comparative genome analysis of Salmonella enteritidis PT4 and Salmonella gallinarum 287/91 provides insights into evolutionary and host adaptation pathways.</title>
        <authorList>
            <person name="Thomson N.R."/>
            <person name="Clayton D.J."/>
            <person name="Windhorst D."/>
            <person name="Vernikos G."/>
            <person name="Davidson S."/>
            <person name="Churcher C."/>
            <person name="Quail M.A."/>
            <person name="Stevens M."/>
            <person name="Jones M.A."/>
            <person name="Watson M."/>
            <person name="Barron A."/>
            <person name="Layton A."/>
            <person name="Pickard D."/>
            <person name="Kingsley R.A."/>
            <person name="Bignell A."/>
            <person name="Clark L."/>
            <person name="Harris B."/>
            <person name="Ormond D."/>
            <person name="Abdellah Z."/>
            <person name="Brooks K."/>
            <person name="Cherevach I."/>
            <person name="Chillingworth T."/>
            <person name="Woodward J."/>
            <person name="Norberczak H."/>
            <person name="Lord A."/>
            <person name="Arrowsmith C."/>
            <person name="Jagels K."/>
            <person name="Moule S."/>
            <person name="Mungall K."/>
            <person name="Saunders M."/>
            <person name="Whitehead S."/>
            <person name="Chabalgoity J.A."/>
            <person name="Maskell D."/>
            <person name="Humphreys T."/>
            <person name="Roberts M."/>
            <person name="Barrow P.A."/>
            <person name="Dougan G."/>
            <person name="Parkhill J."/>
        </authorList>
    </citation>
    <scope>NUCLEOTIDE SEQUENCE [LARGE SCALE GENOMIC DNA]</scope>
    <source>
        <strain>287/91 / NCTC 13346</strain>
    </source>
</reference>
<organism>
    <name type="scientific">Salmonella gallinarum (strain 287/91 / NCTC 13346)</name>
    <dbReference type="NCBI Taxonomy" id="550538"/>
    <lineage>
        <taxon>Bacteria</taxon>
        <taxon>Pseudomonadati</taxon>
        <taxon>Pseudomonadota</taxon>
        <taxon>Gammaproteobacteria</taxon>
        <taxon>Enterobacterales</taxon>
        <taxon>Enterobacteriaceae</taxon>
        <taxon>Salmonella</taxon>
    </lineage>
</organism>
<gene>
    <name evidence="1" type="primary">panB</name>
    <name type="ordered locus">SG0186</name>
</gene>
<accession>B5RHC1</accession>